<comment type="function">
    <text evidence="1">Binds to the 23S rRNA.</text>
</comment>
<comment type="similarity">
    <text evidence="1">Belongs to the bacterial ribosomal protein bL9 family.</text>
</comment>
<name>RL9_HAHCH</name>
<proteinExistence type="inferred from homology"/>
<sequence>MEVILLEKVANLGNLGDKVKVRAGYGRNFLVPYGKAVPATKANVEQFEARRAELEKSAAEKLSAAQARAEAINGKEVTIVAKSGDEGKLFGSVGTKDIADAVTALGVEVEKSEVRLPEGALRNTGEYEVDVQMHTDVTATVKVIVVGE</sequence>
<gene>
    <name evidence="1" type="primary">rplI</name>
    <name type="ordered locus">HCH_01713</name>
</gene>
<protein>
    <recommendedName>
        <fullName evidence="1">Large ribosomal subunit protein bL9</fullName>
    </recommendedName>
    <alternativeName>
        <fullName evidence="2">50S ribosomal protein L9</fullName>
    </alternativeName>
</protein>
<organism>
    <name type="scientific">Hahella chejuensis (strain KCTC 2396)</name>
    <dbReference type="NCBI Taxonomy" id="349521"/>
    <lineage>
        <taxon>Bacteria</taxon>
        <taxon>Pseudomonadati</taxon>
        <taxon>Pseudomonadota</taxon>
        <taxon>Gammaproteobacteria</taxon>
        <taxon>Oceanospirillales</taxon>
        <taxon>Hahellaceae</taxon>
        <taxon>Hahella</taxon>
    </lineage>
</organism>
<dbReference type="EMBL" id="CP000155">
    <property type="protein sequence ID" value="ABC28561.1"/>
    <property type="molecule type" value="Genomic_DNA"/>
</dbReference>
<dbReference type="RefSeq" id="WP_011395633.1">
    <property type="nucleotide sequence ID" value="NC_007645.1"/>
</dbReference>
<dbReference type="SMR" id="Q2SLB3"/>
<dbReference type="STRING" id="349521.HCH_01713"/>
<dbReference type="KEGG" id="hch:HCH_01713"/>
<dbReference type="eggNOG" id="COG0359">
    <property type="taxonomic scope" value="Bacteria"/>
</dbReference>
<dbReference type="HOGENOM" id="CLU_078938_4_1_6"/>
<dbReference type="OrthoDB" id="9788336at2"/>
<dbReference type="Proteomes" id="UP000000238">
    <property type="component" value="Chromosome"/>
</dbReference>
<dbReference type="GO" id="GO:1990904">
    <property type="term" value="C:ribonucleoprotein complex"/>
    <property type="evidence" value="ECO:0007669"/>
    <property type="project" value="UniProtKB-KW"/>
</dbReference>
<dbReference type="GO" id="GO:0005840">
    <property type="term" value="C:ribosome"/>
    <property type="evidence" value="ECO:0007669"/>
    <property type="project" value="UniProtKB-KW"/>
</dbReference>
<dbReference type="GO" id="GO:0019843">
    <property type="term" value="F:rRNA binding"/>
    <property type="evidence" value="ECO:0007669"/>
    <property type="project" value="UniProtKB-UniRule"/>
</dbReference>
<dbReference type="GO" id="GO:0003735">
    <property type="term" value="F:structural constituent of ribosome"/>
    <property type="evidence" value="ECO:0007669"/>
    <property type="project" value="InterPro"/>
</dbReference>
<dbReference type="GO" id="GO:0006412">
    <property type="term" value="P:translation"/>
    <property type="evidence" value="ECO:0007669"/>
    <property type="project" value="UniProtKB-UniRule"/>
</dbReference>
<dbReference type="FunFam" id="3.40.5.10:FF:000001">
    <property type="entry name" value="50S ribosomal protein L9"/>
    <property type="match status" value="1"/>
</dbReference>
<dbReference type="Gene3D" id="3.10.430.100">
    <property type="entry name" value="Ribosomal protein L9, C-terminal domain"/>
    <property type="match status" value="1"/>
</dbReference>
<dbReference type="Gene3D" id="3.40.5.10">
    <property type="entry name" value="Ribosomal protein L9, N-terminal domain"/>
    <property type="match status" value="1"/>
</dbReference>
<dbReference type="HAMAP" id="MF_00503">
    <property type="entry name" value="Ribosomal_bL9"/>
    <property type="match status" value="1"/>
</dbReference>
<dbReference type="InterPro" id="IPR000244">
    <property type="entry name" value="Ribosomal_bL9"/>
</dbReference>
<dbReference type="InterPro" id="IPR009027">
    <property type="entry name" value="Ribosomal_bL9/RNase_H1_N"/>
</dbReference>
<dbReference type="InterPro" id="IPR020594">
    <property type="entry name" value="Ribosomal_bL9_bac/chp"/>
</dbReference>
<dbReference type="InterPro" id="IPR020069">
    <property type="entry name" value="Ribosomal_bL9_C"/>
</dbReference>
<dbReference type="InterPro" id="IPR036791">
    <property type="entry name" value="Ribosomal_bL9_C_sf"/>
</dbReference>
<dbReference type="InterPro" id="IPR020070">
    <property type="entry name" value="Ribosomal_bL9_N"/>
</dbReference>
<dbReference type="InterPro" id="IPR036935">
    <property type="entry name" value="Ribosomal_bL9_N_sf"/>
</dbReference>
<dbReference type="NCBIfam" id="TIGR00158">
    <property type="entry name" value="L9"/>
    <property type="match status" value="1"/>
</dbReference>
<dbReference type="PANTHER" id="PTHR21368">
    <property type="entry name" value="50S RIBOSOMAL PROTEIN L9"/>
    <property type="match status" value="1"/>
</dbReference>
<dbReference type="Pfam" id="PF03948">
    <property type="entry name" value="Ribosomal_L9_C"/>
    <property type="match status" value="1"/>
</dbReference>
<dbReference type="Pfam" id="PF01281">
    <property type="entry name" value="Ribosomal_L9_N"/>
    <property type="match status" value="1"/>
</dbReference>
<dbReference type="SUPFAM" id="SSF55658">
    <property type="entry name" value="L9 N-domain-like"/>
    <property type="match status" value="1"/>
</dbReference>
<dbReference type="SUPFAM" id="SSF55653">
    <property type="entry name" value="Ribosomal protein L9 C-domain"/>
    <property type="match status" value="1"/>
</dbReference>
<dbReference type="PROSITE" id="PS00651">
    <property type="entry name" value="RIBOSOMAL_L9"/>
    <property type="match status" value="1"/>
</dbReference>
<accession>Q2SLB3</accession>
<evidence type="ECO:0000255" key="1">
    <source>
        <dbReference type="HAMAP-Rule" id="MF_00503"/>
    </source>
</evidence>
<evidence type="ECO:0000305" key="2"/>
<reference key="1">
    <citation type="journal article" date="2005" name="Nucleic Acids Res.">
        <title>Genomic blueprint of Hahella chejuensis, a marine microbe producing an algicidal agent.</title>
        <authorList>
            <person name="Jeong H."/>
            <person name="Yim J.H."/>
            <person name="Lee C."/>
            <person name="Choi S.-H."/>
            <person name="Park Y.K."/>
            <person name="Yoon S.H."/>
            <person name="Hur C.-G."/>
            <person name="Kang H.-Y."/>
            <person name="Kim D."/>
            <person name="Lee H.H."/>
            <person name="Park K.H."/>
            <person name="Park S.-H."/>
            <person name="Park H.-S."/>
            <person name="Lee H.K."/>
            <person name="Oh T.K."/>
            <person name="Kim J.F."/>
        </authorList>
    </citation>
    <scope>NUCLEOTIDE SEQUENCE [LARGE SCALE GENOMIC DNA]</scope>
    <source>
        <strain>KCTC 2396</strain>
    </source>
</reference>
<keyword id="KW-1185">Reference proteome</keyword>
<keyword id="KW-0687">Ribonucleoprotein</keyword>
<keyword id="KW-0689">Ribosomal protein</keyword>
<keyword id="KW-0694">RNA-binding</keyword>
<keyword id="KW-0699">rRNA-binding</keyword>
<feature type="chain" id="PRO_0000236531" description="Large ribosomal subunit protein bL9">
    <location>
        <begin position="1"/>
        <end position="148"/>
    </location>
</feature>